<keyword id="KW-0025">Alternative splicing</keyword>
<keyword id="KW-1048">Host nucleus</keyword>
<keyword id="KW-0945">Host-virus interaction</keyword>
<keyword id="KW-0813">Transport</keyword>
<keyword id="KW-0946">Virion</keyword>
<organismHost>
    <name type="scientific">Aves</name>
    <dbReference type="NCBI Taxonomy" id="8782"/>
</organismHost>
<comment type="function">
    <text evidence="1">Mediates the nuclear export of encapsidated genomic RNAs (ribonucleoproteins, RNPs). Acts as an adapter between viral RNPs complexes and the nuclear export machinery of the cell. Possesses no intrinsic RNA-binding activity, but includes a C-terminal M1-binding domain. This domain is believed to allow recognition of RNPs bound to the protein M1. Since protein M1 is not available in large quantities before late stages of infection, such an indirect recognition mechanism probably ensures that genomic RNPs are not exported from the host nucleus until sufficient quantities of viral mRNA and progeny genomic RNA have been synthesized. Furthermore, the RNPs enter the host cytoplasm only when associated with the M1 protein that is necessary to guide them to the plasma membrane. May down-regulate viral RNA synthesis when overproduced.</text>
</comment>
<comment type="subunit">
    <text evidence="1">Interacts with protein M1. May interact with host nucleoporin RAB/HRB and exportin XPO1/CRM1.</text>
</comment>
<comment type="subcellular location">
    <subcellularLocation>
        <location evidence="1">Virion</location>
    </subcellularLocation>
    <subcellularLocation>
        <location evidence="1">Host nucleus</location>
    </subcellularLocation>
</comment>
<comment type="alternative products">
    <event type="alternative splicing"/>
    <isoform>
        <id>P69263-1</id>
        <name>NEP</name>
        <name>NS2</name>
        <sequence type="displayed"/>
    </isoform>
    <isoform>
        <id>P30911-1</id>
        <name>NS1</name>
        <sequence type="external"/>
    </isoform>
</comment>
<comment type="miscellaneous">
    <text>Average number present in a viral particle is estimated to be 130-200 molecules.</text>
</comment>
<comment type="similarity">
    <text evidence="1">Belongs to the influenza viruses NEP family.</text>
</comment>
<protein>
    <recommendedName>
        <fullName evidence="1">Nuclear export protein</fullName>
        <shortName evidence="1">NEP</shortName>
    </recommendedName>
    <alternativeName>
        <fullName evidence="1">Non-structural protein 2</fullName>
        <shortName evidence="1">NS2</shortName>
    </alternativeName>
</protein>
<dbReference type="EMBL" id="M55468">
    <property type="protein sequence ID" value="ABG72675.1"/>
    <property type="molecule type" value="Genomic_RNA"/>
</dbReference>
<dbReference type="PIR" id="A04098">
    <property type="entry name" value="MNIV26"/>
</dbReference>
<dbReference type="SMR" id="P69263"/>
<dbReference type="GO" id="GO:0042025">
    <property type="term" value="C:host cell nucleus"/>
    <property type="evidence" value="ECO:0007669"/>
    <property type="project" value="UniProtKB-SubCell"/>
</dbReference>
<dbReference type="GO" id="GO:0044423">
    <property type="term" value="C:virion component"/>
    <property type="evidence" value="ECO:0007669"/>
    <property type="project" value="UniProtKB-UniRule"/>
</dbReference>
<dbReference type="GO" id="GO:0039675">
    <property type="term" value="P:exit of virus from host cell nucleus through nuclear pore"/>
    <property type="evidence" value="ECO:0007669"/>
    <property type="project" value="UniProtKB-UniRule"/>
</dbReference>
<dbReference type="Gene3D" id="1.10.287.230">
    <property type="match status" value="1"/>
</dbReference>
<dbReference type="HAMAP" id="MF_04067">
    <property type="entry name" value="INFV_NEP"/>
    <property type="match status" value="1"/>
</dbReference>
<dbReference type="InterPro" id="IPR000968">
    <property type="entry name" value="Flu_NS2"/>
</dbReference>
<dbReference type="Pfam" id="PF00601">
    <property type="entry name" value="Flu_NS2"/>
    <property type="match status" value="1"/>
</dbReference>
<dbReference type="SUPFAM" id="SSF101156">
    <property type="entry name" value="Nonstructural protein ns2, Nep, M1-binding domain"/>
    <property type="match status" value="1"/>
</dbReference>
<sequence length="121" mass="14287">MDSNTITSFQDILQRMSKMQLESSSVDLNGMITQFERLKIYRDSLGESVMRMGDLHSLQSRNATWREELSQKFEEIRWLIAECRNILTKTENSFEQITFLQALQLLLEVESEIRTFSFQLI</sequence>
<name>NEP_I63A1</name>
<evidence type="ECO:0000255" key="1">
    <source>
        <dbReference type="HAMAP-Rule" id="MF_04067"/>
    </source>
</evidence>
<gene>
    <name evidence="1" type="primary">NS</name>
</gene>
<organism>
    <name type="scientific">Influenza A virus (strain A/Turkey/Canada/1963 H6N8)</name>
    <dbReference type="NCBI Taxonomy" id="387262"/>
    <lineage>
        <taxon>Viruses</taxon>
        <taxon>Riboviria</taxon>
        <taxon>Orthornavirae</taxon>
        <taxon>Negarnaviricota</taxon>
        <taxon>Polyploviricotina</taxon>
        <taxon>Insthoviricetes</taxon>
        <taxon>Articulavirales</taxon>
        <taxon>Orthomyxoviridae</taxon>
        <taxon>Alphainfluenzavirus</taxon>
        <taxon>Alphainfluenzavirus influenzae</taxon>
        <taxon>Influenza A virus</taxon>
    </lineage>
</organism>
<feature type="chain" id="PRO_0000079007" description="Nuclear export protein">
    <location>
        <begin position="1"/>
        <end position="121"/>
    </location>
</feature>
<feature type="short sequence motif" description="Nuclear export signal" evidence="1">
    <location>
        <begin position="12"/>
        <end position="21"/>
    </location>
</feature>
<feature type="short sequence motif" description="Nuclear export signal" evidence="1">
    <location>
        <begin position="85"/>
        <end position="94"/>
    </location>
</feature>
<accession>P69263</accession>
<accession>P03510</accession>
<accession>P13151</accession>
<accession>Q0PDL6</accession>
<reference key="1">
    <citation type="journal article" date="1991" name="Virology">
        <title>Phylogenetic relationship of the nonstructural (NS) genes of influenza A viruses.</title>
        <authorList>
            <person name="Ludwig S."/>
            <person name="Schultz U."/>
            <person name="Mandler J."/>
            <person name="Fitch W.M."/>
            <person name="Scholtissek C."/>
        </authorList>
    </citation>
    <scope>NUCLEOTIDE SEQUENCE [GENOMIC RNA]</scope>
</reference>
<proteinExistence type="inferred from homology"/>